<proteinExistence type="evidence at transcript level"/>
<reference key="1">
    <citation type="submission" date="2000-02" db="EMBL/GenBank/DDBJ databases">
        <title>Oryza sativa DNA polymerase delta catalytic chain.</title>
        <authorList>
            <person name="Hatanaka M."/>
            <person name="Kimura S."/>
            <person name="Sakaguti K."/>
        </authorList>
    </citation>
    <scope>NUCLEOTIDE SEQUENCE [MRNA]</scope>
</reference>
<reference key="2">
    <citation type="journal article" date="2005" name="BMC Biol.">
        <title>The sequence of rice chromosomes 11 and 12, rich in disease resistance genes and recent gene duplications.</title>
        <authorList>
            <consortium name="The rice chromosomes 11 and 12 sequencing consortia"/>
        </authorList>
    </citation>
    <scope>NUCLEOTIDE SEQUENCE [LARGE SCALE GENOMIC DNA]</scope>
    <source>
        <strain>cv. Nipponbare</strain>
    </source>
</reference>
<reference key="3">
    <citation type="journal article" date="2005" name="Nature">
        <title>The map-based sequence of the rice genome.</title>
        <authorList>
            <consortium name="International rice genome sequencing project (IRGSP)"/>
        </authorList>
    </citation>
    <scope>NUCLEOTIDE SEQUENCE [LARGE SCALE GENOMIC DNA]</scope>
    <source>
        <strain>cv. Nipponbare</strain>
    </source>
</reference>
<reference key="4">
    <citation type="journal article" date="2008" name="Nucleic Acids Res.">
        <title>The rice annotation project database (RAP-DB): 2008 update.</title>
        <authorList>
            <consortium name="The rice annotation project (RAP)"/>
        </authorList>
    </citation>
    <scope>GENOME REANNOTATION</scope>
    <source>
        <strain>cv. Nipponbare</strain>
    </source>
</reference>
<reference key="5">
    <citation type="journal article" date="2013" name="Rice">
        <title>Improvement of the Oryza sativa Nipponbare reference genome using next generation sequence and optical map data.</title>
        <authorList>
            <person name="Kawahara Y."/>
            <person name="de la Bastide M."/>
            <person name="Hamilton J.P."/>
            <person name="Kanamori H."/>
            <person name="McCombie W.R."/>
            <person name="Ouyang S."/>
            <person name="Schwartz D.C."/>
            <person name="Tanaka T."/>
            <person name="Wu J."/>
            <person name="Zhou S."/>
            <person name="Childs K.L."/>
            <person name="Davidson R.M."/>
            <person name="Lin H."/>
            <person name="Quesada-Ocampo L."/>
            <person name="Vaillancourt B."/>
            <person name="Sakai H."/>
            <person name="Lee S.S."/>
            <person name="Kim J."/>
            <person name="Numa H."/>
            <person name="Itoh T."/>
            <person name="Buell C.R."/>
            <person name="Matsumoto T."/>
        </authorList>
    </citation>
    <scope>GENOME REANNOTATION</scope>
    <source>
        <strain>cv. Nipponbare</strain>
    </source>
</reference>
<protein>
    <recommendedName>
        <fullName>DNA polymerase delta catalytic subunit</fullName>
        <ecNumber>2.7.7.7</ecNumber>
    </recommendedName>
</protein>
<comment type="function">
    <text>This polymerase possesses two enzymatic activities: DNA synthesis (polymerase) and an exonucleolytic activity that degrades single-stranded DNA in the 3'- to 5'-direction.</text>
</comment>
<comment type="catalytic activity">
    <reaction>
        <text>DNA(n) + a 2'-deoxyribonucleoside 5'-triphosphate = DNA(n+1) + diphosphate</text>
        <dbReference type="Rhea" id="RHEA:22508"/>
        <dbReference type="Rhea" id="RHEA-COMP:17339"/>
        <dbReference type="Rhea" id="RHEA-COMP:17340"/>
        <dbReference type="ChEBI" id="CHEBI:33019"/>
        <dbReference type="ChEBI" id="CHEBI:61560"/>
        <dbReference type="ChEBI" id="CHEBI:173112"/>
        <dbReference type="EC" id="2.7.7.7"/>
    </reaction>
</comment>
<comment type="cofactor">
    <cofactor evidence="1">
        <name>[4Fe-4S] cluster</name>
        <dbReference type="ChEBI" id="CHEBI:49883"/>
    </cofactor>
    <text evidence="1">Binds 1 [4Fe-4S] cluster.</text>
</comment>
<comment type="subunit">
    <text evidence="1">Heterodimer with subunits of 125 kDa and 50 kDa. The 125 kDa subunit contains the polymerase active site and most likely the active site for the 3'-5' exonuclease activity (By similarity).</text>
</comment>
<comment type="subcellular location">
    <subcellularLocation>
        <location>Nucleus</location>
    </subcellularLocation>
</comment>
<comment type="domain">
    <text evidence="1">The CysB motif binds 1 4Fe-4S cluster and is required for the formation of polymerase complexes.</text>
</comment>
<comment type="miscellaneous">
    <text>In eukaryotes there are five DNA polymerases: alpha, beta, gamma, delta, and epsilon which are responsible for different reactions of DNA synthesis.</text>
</comment>
<comment type="similarity">
    <text evidence="3">Belongs to the DNA polymerase type-B family.</text>
</comment>
<comment type="sequence caution" evidence="3">
    <conflict type="erroneous gene model prediction">
        <sequence resource="EMBL-CDS" id="AAY23282"/>
    </conflict>
</comment>
<keyword id="KW-0004">4Fe-4S</keyword>
<keyword id="KW-0235">DNA replication</keyword>
<keyword id="KW-0238">DNA-binding</keyword>
<keyword id="KW-0239">DNA-directed DNA polymerase</keyword>
<keyword id="KW-0269">Exonuclease</keyword>
<keyword id="KW-0378">Hydrolase</keyword>
<keyword id="KW-0408">Iron</keyword>
<keyword id="KW-0411">Iron-sulfur</keyword>
<keyword id="KW-0479">Metal-binding</keyword>
<keyword id="KW-0540">Nuclease</keyword>
<keyword id="KW-0548">Nucleotidyltransferase</keyword>
<keyword id="KW-0539">Nucleus</keyword>
<keyword id="KW-1185">Reference proteome</keyword>
<keyword id="KW-0808">Transferase</keyword>
<keyword id="KW-0862">Zinc</keyword>
<keyword id="KW-0863">Zinc-finger</keyword>
<name>DPOD1_ORYSJ</name>
<gene>
    <name type="primary">POLD1</name>
    <name type="ordered locus">Os11g0186400</name>
    <name type="ordered locus">LOC_Os11g08330</name>
</gene>
<organism>
    <name type="scientific">Oryza sativa subsp. japonica</name>
    <name type="common">Rice</name>
    <dbReference type="NCBI Taxonomy" id="39947"/>
    <lineage>
        <taxon>Eukaryota</taxon>
        <taxon>Viridiplantae</taxon>
        <taxon>Streptophyta</taxon>
        <taxon>Embryophyta</taxon>
        <taxon>Tracheophyta</taxon>
        <taxon>Spermatophyta</taxon>
        <taxon>Magnoliopsida</taxon>
        <taxon>Liliopsida</taxon>
        <taxon>Poales</taxon>
        <taxon>Poaceae</taxon>
        <taxon>BOP clade</taxon>
        <taxon>Oryzoideae</taxon>
        <taxon>Oryzeae</taxon>
        <taxon>Oryzinae</taxon>
        <taxon>Oryza</taxon>
        <taxon>Oryza sativa</taxon>
    </lineage>
</organism>
<sequence>MSSGGRGGKRRGAPPPGPSGAAAKRAHPGGTPQPPPPAATAAAPVAEEEDMMDEDVFLDETILAEDEEALLLLDRDEALASRLSRWRRPALPADLASGCSRNVAFQQLEIDYVIGESHKVLLPNSSGPAAILRIFGVTREGHSVCCQVHGFEPYFYISCPMGMGPDDISRFHQTLEGRMKDSNRNSNVPRFVKRIELVQKQTIMHYQPQQSQPFLKIVVALPTMVASCRGILERGITIEGLGSKSFLTYESNILFALRFMIDCNIVGGNWIEVPAGKYMKAARIMSYCQLELDCLYSDLVSHAAEGEHSKMAPFRILSFDIECAGRKGHFPEPTHDPVIQIANLVTLQGEGQPFVRNVMTLKSCSPIVGVDVMSFDTERDVLLAWRDFIREVDPDIIIGYNICKFDLPYLIERAEVLKIVEFPILGRIRNSRVRVRDTTFSSRQYGMRESKDVAVEGRVQFDLLQAMQRDYKLSSYSLNSVSAHFLGEQKEDVHHSIISDLQNGNSETRRRLAVYCLKDAYLPQRLLDKLMYIYNYVEMARVTGVPISFLLSRGQSIKVLSQLLRKAKQKNLVIPNIKGQASGQDTFEGATVLEARAGFYEKPIATLDFASLYPSIMMAYNLCYCTLVPPEDARKLNLPPESVNKTPSGETFVKPDVQKGILPEILEELLAARKRAKADLKEAKDPFERAVLDGRQLALKISANSVYGFTGATVGQLPCLEISSSVTSYGRQMIEHTKKLVEDKFTTLGGYEHNAEVIYGDTDSVMVQFGVSTVEDAMKLGREAADYISGTFIKPIKLEFEKIYFPYLLISKKRYAGLYWTNPEKFDKMDTKGIETVRRDNCLLVKNLVTECLHKILVDRDVPGAVQYVKNTISDLLMNRVDLSLLVITKGLTKTGEDYAVKAAHVELAERMRKRDAATAPTVGDRVPYVIIKAAKGAKAYERSEDPIYVLDNNIPIDPQYYLENQISKPLLRIFEPILKNASRELLHGSHTRAVSISTPSNSGIMKFAKKQLTCLGCKAVISGSNQTLCFHCKGREAELYCKTVGNVSELEMLFGRLWTQCQECQGSLHQDVLCTSRDCPIFYRRRKAQKDMAEARVQLQRWDF</sequence>
<evidence type="ECO:0000250" key="1"/>
<evidence type="ECO:0000256" key="2">
    <source>
        <dbReference type="SAM" id="MobiDB-lite"/>
    </source>
</evidence>
<evidence type="ECO:0000305" key="3"/>
<accession>Q9LRE6</accession>
<accession>A0A0N7KSJ4</accession>
<accession>Q2R9L5</accession>
<accession>Q53NH0</accession>
<accession>Q53P50</accession>
<feature type="chain" id="PRO_0000046450" description="DNA polymerase delta catalytic subunit">
    <location>
        <begin position="1"/>
        <end position="1105"/>
    </location>
</feature>
<feature type="zinc finger region" description="CysA-type">
    <location>
        <begin position="1015"/>
        <end position="1033"/>
    </location>
</feature>
<feature type="region of interest" description="Disordered" evidence="2">
    <location>
        <begin position="1"/>
        <end position="46"/>
    </location>
</feature>
<feature type="short sequence motif" description="CysB motif">
    <location>
        <begin position="1062"/>
        <end position="1080"/>
    </location>
</feature>
<feature type="binding site" evidence="1">
    <location>
        <position position="1015"/>
    </location>
    <ligand>
        <name>Zn(2+)</name>
        <dbReference type="ChEBI" id="CHEBI:29105"/>
    </ligand>
</feature>
<feature type="binding site" evidence="1">
    <location>
        <position position="1018"/>
    </location>
    <ligand>
        <name>Zn(2+)</name>
        <dbReference type="ChEBI" id="CHEBI:29105"/>
    </ligand>
</feature>
<feature type="binding site" evidence="1">
    <location>
        <position position="1030"/>
    </location>
    <ligand>
        <name>Zn(2+)</name>
        <dbReference type="ChEBI" id="CHEBI:29105"/>
    </ligand>
</feature>
<feature type="binding site" evidence="1">
    <location>
        <position position="1033"/>
    </location>
    <ligand>
        <name>Zn(2+)</name>
        <dbReference type="ChEBI" id="CHEBI:29105"/>
    </ligand>
</feature>
<feature type="binding site" evidence="1">
    <location>
        <position position="1062"/>
    </location>
    <ligand>
        <name>[4Fe-4S] cluster</name>
        <dbReference type="ChEBI" id="CHEBI:49883"/>
    </ligand>
</feature>
<feature type="binding site" evidence="1">
    <location>
        <position position="1065"/>
    </location>
    <ligand>
        <name>[4Fe-4S] cluster</name>
        <dbReference type="ChEBI" id="CHEBI:49883"/>
    </ligand>
</feature>
<feature type="binding site" evidence="1">
    <location>
        <position position="1075"/>
    </location>
    <ligand>
        <name>[4Fe-4S] cluster</name>
        <dbReference type="ChEBI" id="CHEBI:49883"/>
    </ligand>
</feature>
<feature type="binding site" evidence="1">
    <location>
        <position position="1080"/>
    </location>
    <ligand>
        <name>[4Fe-4S] cluster</name>
        <dbReference type="ChEBI" id="CHEBI:49883"/>
    </ligand>
</feature>
<dbReference type="EC" id="2.7.7.7"/>
<dbReference type="EMBL" id="AB037899">
    <property type="protein sequence ID" value="BAA99573.1"/>
    <property type="molecule type" value="mRNA"/>
</dbReference>
<dbReference type="EMBL" id="AC128644">
    <property type="protein sequence ID" value="AAX96341.1"/>
    <property type="molecule type" value="Genomic_DNA"/>
</dbReference>
<dbReference type="EMBL" id="AC134047">
    <property type="protein sequence ID" value="AAY23282.1"/>
    <property type="status" value="ALT_SEQ"/>
    <property type="molecule type" value="Genomic_DNA"/>
</dbReference>
<dbReference type="EMBL" id="DP000010">
    <property type="protein sequence ID" value="ABA91815.1"/>
    <property type="molecule type" value="Genomic_DNA"/>
</dbReference>
<dbReference type="EMBL" id="AP008217">
    <property type="protein sequence ID" value="BAF27768.1"/>
    <property type="molecule type" value="Genomic_DNA"/>
</dbReference>
<dbReference type="EMBL" id="AP014967">
    <property type="protein sequence ID" value="BAT12986.1"/>
    <property type="molecule type" value="Genomic_DNA"/>
</dbReference>
<dbReference type="RefSeq" id="XP_015617044.1">
    <property type="nucleotide sequence ID" value="XM_015761558.1"/>
</dbReference>
<dbReference type="SMR" id="Q9LRE6"/>
<dbReference type="FunCoup" id="Q9LRE6">
    <property type="interactions" value="2224"/>
</dbReference>
<dbReference type="STRING" id="39947.Q9LRE6"/>
<dbReference type="PaxDb" id="39947-Q9LRE6"/>
<dbReference type="EnsemblPlants" id="Os11t0186400-01">
    <property type="protein sequence ID" value="Os11t0186400-01"/>
    <property type="gene ID" value="Os11g0186400"/>
</dbReference>
<dbReference type="Gramene" id="Os11t0186400-01">
    <property type="protein sequence ID" value="Os11t0186400-01"/>
    <property type="gene ID" value="Os11g0186400"/>
</dbReference>
<dbReference type="KEGG" id="dosa:Os11g0186400"/>
<dbReference type="eggNOG" id="KOG0969">
    <property type="taxonomic scope" value="Eukaryota"/>
</dbReference>
<dbReference type="HOGENOM" id="CLU_000203_2_0_1"/>
<dbReference type="InParanoid" id="Q9LRE6"/>
<dbReference type="OMA" id="CNNCRPR"/>
<dbReference type="OrthoDB" id="2414538at2759"/>
<dbReference type="PlantReactome" id="R-OSA-9675782">
    <property type="pathway name" value="Maturation"/>
</dbReference>
<dbReference type="PlantReactome" id="R-OSA-9675815">
    <property type="pathway name" value="Leading strand synthesis"/>
</dbReference>
<dbReference type="PlantReactome" id="R-OSA-9675885">
    <property type="pathway name" value="Lagging strand synthesis"/>
</dbReference>
<dbReference type="Proteomes" id="UP000000763">
    <property type="component" value="Chromosome 11"/>
</dbReference>
<dbReference type="Proteomes" id="UP000059680">
    <property type="component" value="Chromosome 11"/>
</dbReference>
<dbReference type="GO" id="GO:0043625">
    <property type="term" value="C:delta DNA polymerase complex"/>
    <property type="evidence" value="ECO:0000318"/>
    <property type="project" value="GO_Central"/>
</dbReference>
<dbReference type="GO" id="GO:0008296">
    <property type="term" value="F:3'-5'-DNA exonuclease activity"/>
    <property type="evidence" value="ECO:0000318"/>
    <property type="project" value="GO_Central"/>
</dbReference>
<dbReference type="GO" id="GO:0051539">
    <property type="term" value="F:4 iron, 4 sulfur cluster binding"/>
    <property type="evidence" value="ECO:0007669"/>
    <property type="project" value="UniProtKB-KW"/>
</dbReference>
<dbReference type="GO" id="GO:0003677">
    <property type="term" value="F:DNA binding"/>
    <property type="evidence" value="ECO:0007669"/>
    <property type="project" value="UniProtKB-KW"/>
</dbReference>
<dbReference type="GO" id="GO:0003887">
    <property type="term" value="F:DNA-directed DNA polymerase activity"/>
    <property type="evidence" value="ECO:0000318"/>
    <property type="project" value="GO_Central"/>
</dbReference>
<dbReference type="GO" id="GO:0000166">
    <property type="term" value="F:nucleotide binding"/>
    <property type="evidence" value="ECO:0007669"/>
    <property type="project" value="InterPro"/>
</dbReference>
<dbReference type="GO" id="GO:0008270">
    <property type="term" value="F:zinc ion binding"/>
    <property type="evidence" value="ECO:0007669"/>
    <property type="project" value="UniProtKB-KW"/>
</dbReference>
<dbReference type="GO" id="GO:0006287">
    <property type="term" value="P:base-excision repair, gap-filling"/>
    <property type="evidence" value="ECO:0000318"/>
    <property type="project" value="GO_Central"/>
</dbReference>
<dbReference type="GO" id="GO:0045004">
    <property type="term" value="P:DNA replication proofreading"/>
    <property type="evidence" value="ECO:0000318"/>
    <property type="project" value="GO_Central"/>
</dbReference>
<dbReference type="GO" id="GO:0006261">
    <property type="term" value="P:DNA-templated DNA replication"/>
    <property type="evidence" value="ECO:0000318"/>
    <property type="project" value="GO_Central"/>
</dbReference>
<dbReference type="GO" id="GO:0006297">
    <property type="term" value="P:nucleotide-excision repair, DNA gap filling"/>
    <property type="evidence" value="ECO:0000318"/>
    <property type="project" value="GO_Central"/>
</dbReference>
<dbReference type="CDD" id="cd05777">
    <property type="entry name" value="DNA_polB_delta_exo"/>
    <property type="match status" value="1"/>
</dbReference>
<dbReference type="CDD" id="cd05533">
    <property type="entry name" value="POLBc_delta"/>
    <property type="match status" value="1"/>
</dbReference>
<dbReference type="FunFam" id="1.10.132.60:FF:000001">
    <property type="entry name" value="DNA polymerase"/>
    <property type="match status" value="1"/>
</dbReference>
<dbReference type="FunFam" id="1.10.287.690:FF:000001">
    <property type="entry name" value="DNA polymerase"/>
    <property type="match status" value="1"/>
</dbReference>
<dbReference type="FunFam" id="3.30.342.10:FF:000007">
    <property type="entry name" value="DNA polymerase"/>
    <property type="match status" value="1"/>
</dbReference>
<dbReference type="FunFam" id="3.30.420.10:FF:000351">
    <property type="entry name" value="DNA polymerase"/>
    <property type="match status" value="1"/>
</dbReference>
<dbReference type="Gene3D" id="1.10.132.60">
    <property type="entry name" value="DNA polymerase family B, C-terminal domain"/>
    <property type="match status" value="1"/>
</dbReference>
<dbReference type="Gene3D" id="3.30.342.10">
    <property type="entry name" value="DNA Polymerase, chain B, domain 1"/>
    <property type="match status" value="1"/>
</dbReference>
<dbReference type="Gene3D" id="1.10.287.690">
    <property type="entry name" value="Helix hairpin bin"/>
    <property type="match status" value="1"/>
</dbReference>
<dbReference type="Gene3D" id="3.90.1600.10">
    <property type="entry name" value="Palm domain of DNA polymerase"/>
    <property type="match status" value="1"/>
</dbReference>
<dbReference type="Gene3D" id="3.30.420.10">
    <property type="entry name" value="Ribonuclease H-like superfamily/Ribonuclease H"/>
    <property type="match status" value="1"/>
</dbReference>
<dbReference type="InterPro" id="IPR006172">
    <property type="entry name" value="DNA-dir_DNA_pol_B"/>
</dbReference>
<dbReference type="InterPro" id="IPR017964">
    <property type="entry name" value="DNA-dir_DNA_pol_B_CS"/>
</dbReference>
<dbReference type="InterPro" id="IPR006133">
    <property type="entry name" value="DNA-dir_DNA_pol_B_exonuc"/>
</dbReference>
<dbReference type="InterPro" id="IPR006134">
    <property type="entry name" value="DNA-dir_DNA_pol_B_multi_dom"/>
</dbReference>
<dbReference type="InterPro" id="IPR043502">
    <property type="entry name" value="DNA/RNA_pol_sf"/>
</dbReference>
<dbReference type="InterPro" id="IPR042087">
    <property type="entry name" value="DNA_pol_B_thumb"/>
</dbReference>
<dbReference type="InterPro" id="IPR023211">
    <property type="entry name" value="DNA_pol_palm_dom_sf"/>
</dbReference>
<dbReference type="InterPro" id="IPR050240">
    <property type="entry name" value="DNA_pol_type-B"/>
</dbReference>
<dbReference type="InterPro" id="IPR056435">
    <property type="entry name" value="DPOD/Z_N"/>
</dbReference>
<dbReference type="InterPro" id="IPR012337">
    <property type="entry name" value="RNaseH-like_sf"/>
</dbReference>
<dbReference type="InterPro" id="IPR036397">
    <property type="entry name" value="RNaseH_sf"/>
</dbReference>
<dbReference type="InterPro" id="IPR025687">
    <property type="entry name" value="Znf-C4pol"/>
</dbReference>
<dbReference type="NCBIfam" id="TIGR00592">
    <property type="entry name" value="pol2"/>
    <property type="match status" value="1"/>
</dbReference>
<dbReference type="PANTHER" id="PTHR10322">
    <property type="entry name" value="DNA POLYMERASE CATALYTIC SUBUNIT"/>
    <property type="match status" value="1"/>
</dbReference>
<dbReference type="PANTHER" id="PTHR10322:SF23">
    <property type="entry name" value="DNA POLYMERASE DELTA CATALYTIC SUBUNIT"/>
    <property type="match status" value="1"/>
</dbReference>
<dbReference type="Pfam" id="PF00136">
    <property type="entry name" value="DNA_pol_B"/>
    <property type="match status" value="1"/>
</dbReference>
<dbReference type="Pfam" id="PF03104">
    <property type="entry name" value="DNA_pol_B_exo1"/>
    <property type="match status" value="1"/>
</dbReference>
<dbReference type="Pfam" id="PF24055">
    <property type="entry name" value="POL3_N"/>
    <property type="match status" value="1"/>
</dbReference>
<dbReference type="Pfam" id="PF14260">
    <property type="entry name" value="zf-C4pol"/>
    <property type="match status" value="1"/>
</dbReference>
<dbReference type="PRINTS" id="PR00106">
    <property type="entry name" value="DNAPOLB"/>
</dbReference>
<dbReference type="SMART" id="SM00486">
    <property type="entry name" value="POLBc"/>
    <property type="match status" value="1"/>
</dbReference>
<dbReference type="SUPFAM" id="SSF56672">
    <property type="entry name" value="DNA/RNA polymerases"/>
    <property type="match status" value="1"/>
</dbReference>
<dbReference type="SUPFAM" id="SSF53098">
    <property type="entry name" value="Ribonuclease H-like"/>
    <property type="match status" value="1"/>
</dbReference>
<dbReference type="PROSITE" id="PS00116">
    <property type="entry name" value="DNA_POLYMERASE_B"/>
    <property type="match status" value="1"/>
</dbReference>